<organism>
    <name type="scientific">Saccharopolyspora erythraea (strain ATCC 11635 / DSM 40517 / JCM 4748 / NBRC 13426 / NCIMB 8594 / NRRL 2338)</name>
    <dbReference type="NCBI Taxonomy" id="405948"/>
    <lineage>
        <taxon>Bacteria</taxon>
        <taxon>Bacillati</taxon>
        <taxon>Actinomycetota</taxon>
        <taxon>Actinomycetes</taxon>
        <taxon>Pseudonocardiales</taxon>
        <taxon>Pseudonocardiaceae</taxon>
        <taxon>Saccharopolyspora</taxon>
    </lineage>
</organism>
<evidence type="ECO:0000255" key="1">
    <source>
        <dbReference type="HAMAP-Rule" id="MF_00368"/>
    </source>
</evidence>
<evidence type="ECO:0000305" key="2"/>
<dbReference type="EMBL" id="AM420293">
    <property type="protein sequence ID" value="CAM06031.1"/>
    <property type="molecule type" value="Genomic_DNA"/>
</dbReference>
<dbReference type="RefSeq" id="WP_009944091.1">
    <property type="nucleotide sequence ID" value="NC_009142.1"/>
</dbReference>
<dbReference type="SMR" id="A4FPQ6"/>
<dbReference type="STRING" id="405948.SACE_6867"/>
<dbReference type="KEGG" id="sen:SACE_6867"/>
<dbReference type="eggNOG" id="COG0222">
    <property type="taxonomic scope" value="Bacteria"/>
</dbReference>
<dbReference type="HOGENOM" id="CLU_086499_3_0_11"/>
<dbReference type="OrthoDB" id="9811748at2"/>
<dbReference type="Proteomes" id="UP000006728">
    <property type="component" value="Chromosome"/>
</dbReference>
<dbReference type="GO" id="GO:0022625">
    <property type="term" value="C:cytosolic large ribosomal subunit"/>
    <property type="evidence" value="ECO:0007669"/>
    <property type="project" value="TreeGrafter"/>
</dbReference>
<dbReference type="GO" id="GO:0003729">
    <property type="term" value="F:mRNA binding"/>
    <property type="evidence" value="ECO:0007669"/>
    <property type="project" value="TreeGrafter"/>
</dbReference>
<dbReference type="GO" id="GO:0003735">
    <property type="term" value="F:structural constituent of ribosome"/>
    <property type="evidence" value="ECO:0007669"/>
    <property type="project" value="InterPro"/>
</dbReference>
<dbReference type="GO" id="GO:0006412">
    <property type="term" value="P:translation"/>
    <property type="evidence" value="ECO:0007669"/>
    <property type="project" value="UniProtKB-UniRule"/>
</dbReference>
<dbReference type="CDD" id="cd00387">
    <property type="entry name" value="Ribosomal_L7_L12"/>
    <property type="match status" value="1"/>
</dbReference>
<dbReference type="FunFam" id="1.20.5.710:FF:000005">
    <property type="entry name" value="50S ribosomal protein L7/L12"/>
    <property type="match status" value="1"/>
</dbReference>
<dbReference type="FunFam" id="3.30.1390.10:FF:000001">
    <property type="entry name" value="50S ribosomal protein L7/L12"/>
    <property type="match status" value="1"/>
</dbReference>
<dbReference type="Gene3D" id="3.30.1390.10">
    <property type="match status" value="1"/>
</dbReference>
<dbReference type="Gene3D" id="1.20.5.710">
    <property type="entry name" value="Single helix bin"/>
    <property type="match status" value="1"/>
</dbReference>
<dbReference type="HAMAP" id="MF_00368">
    <property type="entry name" value="Ribosomal_bL12"/>
    <property type="match status" value="1"/>
</dbReference>
<dbReference type="InterPro" id="IPR000206">
    <property type="entry name" value="Ribosomal_bL12"/>
</dbReference>
<dbReference type="InterPro" id="IPR013823">
    <property type="entry name" value="Ribosomal_bL12_C"/>
</dbReference>
<dbReference type="InterPro" id="IPR014719">
    <property type="entry name" value="Ribosomal_bL12_C/ClpS-like"/>
</dbReference>
<dbReference type="InterPro" id="IPR008932">
    <property type="entry name" value="Ribosomal_bL12_oligo"/>
</dbReference>
<dbReference type="InterPro" id="IPR036235">
    <property type="entry name" value="Ribosomal_bL12_oligo_N_sf"/>
</dbReference>
<dbReference type="NCBIfam" id="TIGR00855">
    <property type="entry name" value="L12"/>
    <property type="match status" value="1"/>
</dbReference>
<dbReference type="PANTHER" id="PTHR45987">
    <property type="entry name" value="39S RIBOSOMAL PROTEIN L12"/>
    <property type="match status" value="1"/>
</dbReference>
<dbReference type="PANTHER" id="PTHR45987:SF4">
    <property type="entry name" value="LARGE RIBOSOMAL SUBUNIT PROTEIN BL12M"/>
    <property type="match status" value="1"/>
</dbReference>
<dbReference type="Pfam" id="PF00542">
    <property type="entry name" value="Ribosomal_L12"/>
    <property type="match status" value="1"/>
</dbReference>
<dbReference type="Pfam" id="PF16320">
    <property type="entry name" value="Ribosomal_L12_N"/>
    <property type="match status" value="1"/>
</dbReference>
<dbReference type="SUPFAM" id="SSF54736">
    <property type="entry name" value="ClpS-like"/>
    <property type="match status" value="1"/>
</dbReference>
<dbReference type="SUPFAM" id="SSF48300">
    <property type="entry name" value="Ribosomal protein L7/12, oligomerisation (N-terminal) domain"/>
    <property type="match status" value="1"/>
</dbReference>
<comment type="function">
    <text evidence="1">Forms part of the ribosomal stalk which helps the ribosome interact with GTP-bound translation factors. Is thus essential for accurate translation.</text>
</comment>
<comment type="subunit">
    <text evidence="1">Homodimer. Part of the ribosomal stalk of the 50S ribosomal subunit. Forms a multimeric L10(L12)X complex, where L10 forms an elongated spine to which 2 to 4 L12 dimers bind in a sequential fashion. Binds GTP-bound translation factors.</text>
</comment>
<comment type="similarity">
    <text evidence="1">Belongs to the bacterial ribosomal protein bL12 family.</text>
</comment>
<reference key="1">
    <citation type="journal article" date="2007" name="Nat. Biotechnol.">
        <title>Complete genome sequence of the erythromycin-producing bacterium Saccharopolyspora erythraea NRRL23338.</title>
        <authorList>
            <person name="Oliynyk M."/>
            <person name="Samborskyy M."/>
            <person name="Lester J.B."/>
            <person name="Mironenko T."/>
            <person name="Scott N."/>
            <person name="Dickens S."/>
            <person name="Haydock S.F."/>
            <person name="Leadlay P.F."/>
        </authorList>
    </citation>
    <scope>NUCLEOTIDE SEQUENCE [LARGE SCALE GENOMIC DNA]</scope>
    <source>
        <strain>ATCC 11635 / DSM 40517 / JCM 4748 / NBRC 13426 / NCIMB 8594 / NRRL 2338</strain>
    </source>
</reference>
<sequence>MAKLSNEELLDVFKEMTLLELSSFLKEFEETFDVTAAAPVAAAAPAAAGAAAPAAEEQDEFDVVLESAGDKKIQVIKVVREIVSGLGLKEAKELVEGAPKPILEKVDKEKANEAKTKLEESGAKVSLK</sequence>
<feature type="chain" id="PRO_1000007079" description="Large ribosomal subunit protein bL12">
    <location>
        <begin position="1"/>
        <end position="128"/>
    </location>
</feature>
<keyword id="KW-1185">Reference proteome</keyword>
<keyword id="KW-0687">Ribonucleoprotein</keyword>
<keyword id="KW-0689">Ribosomal protein</keyword>
<gene>
    <name evidence="1" type="primary">rplL</name>
    <name type="ordered locus">SACE_6867</name>
</gene>
<accession>A4FPQ6</accession>
<proteinExistence type="inferred from homology"/>
<name>RL7_SACEN</name>
<protein>
    <recommendedName>
        <fullName evidence="1">Large ribosomal subunit protein bL12</fullName>
    </recommendedName>
    <alternativeName>
        <fullName evidence="2">50S ribosomal protein L7/L12</fullName>
    </alternativeName>
</protein>